<reference key="1">
    <citation type="journal article" date="2007" name="PLoS ONE">
        <title>Analysis of the neurotoxin complex genes in Clostridium botulinum A1-A4 and B1 strains: BoNT/A3, /Ba4 and /B1 clusters are located within plasmids.</title>
        <authorList>
            <person name="Smith T.J."/>
            <person name="Hill K.K."/>
            <person name="Foley B.T."/>
            <person name="Detter J.C."/>
            <person name="Munk A.C."/>
            <person name="Bruce D.C."/>
            <person name="Doggett N.A."/>
            <person name="Smith L.A."/>
            <person name="Marks J.D."/>
            <person name="Xie G."/>
            <person name="Brettin T.S."/>
        </authorList>
    </citation>
    <scope>NUCLEOTIDE SEQUENCE [LARGE SCALE GENOMIC DNA]</scope>
    <source>
        <strain>Okra / Type B1</strain>
    </source>
</reference>
<gene>
    <name evidence="1" type="primary">add</name>
    <name type="ordered locus">CLD_3575</name>
</gene>
<evidence type="ECO:0000255" key="1">
    <source>
        <dbReference type="HAMAP-Rule" id="MF_00540"/>
    </source>
</evidence>
<proteinExistence type="inferred from homology"/>
<dbReference type="EC" id="3.5.4.4" evidence="1"/>
<dbReference type="EMBL" id="CP000939">
    <property type="protein sequence ID" value="ACA45112.1"/>
    <property type="molecule type" value="Genomic_DNA"/>
</dbReference>
<dbReference type="RefSeq" id="WP_015957788.1">
    <property type="nucleotide sequence ID" value="NC_010516.1"/>
</dbReference>
<dbReference type="SMR" id="B1IHX4"/>
<dbReference type="KEGG" id="cbb:CLD_3575"/>
<dbReference type="HOGENOM" id="CLU_039228_0_0_9"/>
<dbReference type="Proteomes" id="UP000008541">
    <property type="component" value="Chromosome"/>
</dbReference>
<dbReference type="GO" id="GO:0005829">
    <property type="term" value="C:cytosol"/>
    <property type="evidence" value="ECO:0007669"/>
    <property type="project" value="TreeGrafter"/>
</dbReference>
<dbReference type="GO" id="GO:0046936">
    <property type="term" value="F:2'-deoxyadenosine deaminase activity"/>
    <property type="evidence" value="ECO:0007669"/>
    <property type="project" value="RHEA"/>
</dbReference>
<dbReference type="GO" id="GO:0004000">
    <property type="term" value="F:adenosine deaminase activity"/>
    <property type="evidence" value="ECO:0007669"/>
    <property type="project" value="UniProtKB-UniRule"/>
</dbReference>
<dbReference type="GO" id="GO:0008270">
    <property type="term" value="F:zinc ion binding"/>
    <property type="evidence" value="ECO:0007669"/>
    <property type="project" value="UniProtKB-UniRule"/>
</dbReference>
<dbReference type="GO" id="GO:0006154">
    <property type="term" value="P:adenosine catabolic process"/>
    <property type="evidence" value="ECO:0007669"/>
    <property type="project" value="TreeGrafter"/>
</dbReference>
<dbReference type="GO" id="GO:0043103">
    <property type="term" value="P:hypoxanthine salvage"/>
    <property type="evidence" value="ECO:0007669"/>
    <property type="project" value="TreeGrafter"/>
</dbReference>
<dbReference type="GO" id="GO:0046103">
    <property type="term" value="P:inosine biosynthetic process"/>
    <property type="evidence" value="ECO:0007669"/>
    <property type="project" value="TreeGrafter"/>
</dbReference>
<dbReference type="GO" id="GO:0009117">
    <property type="term" value="P:nucleotide metabolic process"/>
    <property type="evidence" value="ECO:0007669"/>
    <property type="project" value="UniProtKB-KW"/>
</dbReference>
<dbReference type="GO" id="GO:0009168">
    <property type="term" value="P:purine ribonucleoside monophosphate biosynthetic process"/>
    <property type="evidence" value="ECO:0007669"/>
    <property type="project" value="UniProtKB-UniRule"/>
</dbReference>
<dbReference type="CDD" id="cd01320">
    <property type="entry name" value="ADA"/>
    <property type="match status" value="1"/>
</dbReference>
<dbReference type="FunFam" id="3.20.20.140:FF:000093">
    <property type="entry name" value="Adenosine deaminase"/>
    <property type="match status" value="1"/>
</dbReference>
<dbReference type="Gene3D" id="3.20.20.140">
    <property type="entry name" value="Metal-dependent hydrolases"/>
    <property type="match status" value="1"/>
</dbReference>
<dbReference type="HAMAP" id="MF_00540">
    <property type="entry name" value="A_deaminase"/>
    <property type="match status" value="1"/>
</dbReference>
<dbReference type="InterPro" id="IPR028893">
    <property type="entry name" value="A_deaminase"/>
</dbReference>
<dbReference type="InterPro" id="IPR001365">
    <property type="entry name" value="A_deaminase_dom"/>
</dbReference>
<dbReference type="InterPro" id="IPR006330">
    <property type="entry name" value="Ado/ade_deaminase"/>
</dbReference>
<dbReference type="InterPro" id="IPR032466">
    <property type="entry name" value="Metal_Hydrolase"/>
</dbReference>
<dbReference type="NCBIfam" id="TIGR01430">
    <property type="entry name" value="aden_deam"/>
    <property type="match status" value="1"/>
</dbReference>
<dbReference type="PANTHER" id="PTHR11409">
    <property type="entry name" value="ADENOSINE DEAMINASE"/>
    <property type="match status" value="1"/>
</dbReference>
<dbReference type="PANTHER" id="PTHR11409:SF43">
    <property type="entry name" value="ADENOSINE DEAMINASE"/>
    <property type="match status" value="1"/>
</dbReference>
<dbReference type="Pfam" id="PF00962">
    <property type="entry name" value="A_deaminase"/>
    <property type="match status" value="1"/>
</dbReference>
<dbReference type="SUPFAM" id="SSF51556">
    <property type="entry name" value="Metallo-dependent hydrolases"/>
    <property type="match status" value="1"/>
</dbReference>
<comment type="function">
    <text evidence="1">Catalyzes the hydrolytic deamination of adenosine and 2-deoxyadenosine.</text>
</comment>
<comment type="catalytic activity">
    <reaction evidence="1">
        <text>adenosine + H2O + H(+) = inosine + NH4(+)</text>
        <dbReference type="Rhea" id="RHEA:24408"/>
        <dbReference type="ChEBI" id="CHEBI:15377"/>
        <dbReference type="ChEBI" id="CHEBI:15378"/>
        <dbReference type="ChEBI" id="CHEBI:16335"/>
        <dbReference type="ChEBI" id="CHEBI:17596"/>
        <dbReference type="ChEBI" id="CHEBI:28938"/>
        <dbReference type="EC" id="3.5.4.4"/>
    </reaction>
    <physiologicalReaction direction="left-to-right" evidence="1">
        <dbReference type="Rhea" id="RHEA:24409"/>
    </physiologicalReaction>
</comment>
<comment type="catalytic activity">
    <reaction evidence="1">
        <text>2'-deoxyadenosine + H2O + H(+) = 2'-deoxyinosine + NH4(+)</text>
        <dbReference type="Rhea" id="RHEA:28190"/>
        <dbReference type="ChEBI" id="CHEBI:15377"/>
        <dbReference type="ChEBI" id="CHEBI:15378"/>
        <dbReference type="ChEBI" id="CHEBI:17256"/>
        <dbReference type="ChEBI" id="CHEBI:28938"/>
        <dbReference type="ChEBI" id="CHEBI:28997"/>
        <dbReference type="EC" id="3.5.4.4"/>
    </reaction>
    <physiologicalReaction direction="left-to-right" evidence="1">
        <dbReference type="Rhea" id="RHEA:28191"/>
    </physiologicalReaction>
</comment>
<comment type="cofactor">
    <cofactor evidence="1">
        <name>Zn(2+)</name>
        <dbReference type="ChEBI" id="CHEBI:29105"/>
    </cofactor>
    <text evidence="1">Binds 1 zinc ion per subunit.</text>
</comment>
<comment type="similarity">
    <text evidence="1">Belongs to the metallo-dependent hydrolases superfamily. Adenosine and AMP deaminases family. Adenosine deaminase subfamily.</text>
</comment>
<sequence length="335" mass="37748">MNFKKLPKIELHCHLDGSLRVDTILDIAKKDNIPLPSYNKKELINYVSIMDDCNSLDEYLNKFFIPNKVMQTKENLKRIAFELLEDVAADNVKYIEVRFAPLLHVEKGLNIEEIIESVLEGIKEAEKLYDIKGNLILGCMRNMDIPSAFEVVKKGAKFIGKGVVAIDLCAGEEPHFPGKYIEVLKLAKEYGYRITIHAGEAGVGENVLEAINLLNAERIGHGIYIKDCAEAYKLVKEKNIPLEMCPTSNLHTKASESYEAHPFMDFLKDGIKVTINTDNMTVSNTTITKELEMLNKFCGLSIEDYKILYLNAVEASFASSETKEVLKSYVKEITA</sequence>
<organism>
    <name type="scientific">Clostridium botulinum (strain Okra / Type B1)</name>
    <dbReference type="NCBI Taxonomy" id="498213"/>
    <lineage>
        <taxon>Bacteria</taxon>
        <taxon>Bacillati</taxon>
        <taxon>Bacillota</taxon>
        <taxon>Clostridia</taxon>
        <taxon>Eubacteriales</taxon>
        <taxon>Clostridiaceae</taxon>
        <taxon>Clostridium</taxon>
    </lineage>
</organism>
<protein>
    <recommendedName>
        <fullName evidence="1">Adenosine deaminase</fullName>
        <ecNumber evidence="1">3.5.4.4</ecNumber>
    </recommendedName>
    <alternativeName>
        <fullName evidence="1">Adenosine aminohydrolase</fullName>
    </alternativeName>
</protein>
<feature type="chain" id="PRO_1000128836" description="Adenosine deaminase">
    <location>
        <begin position="1"/>
        <end position="335"/>
    </location>
</feature>
<feature type="active site" description="Proton donor" evidence="1">
    <location>
        <position position="200"/>
    </location>
</feature>
<feature type="binding site" evidence="1">
    <location>
        <position position="12"/>
    </location>
    <ligand>
        <name>Zn(2+)</name>
        <dbReference type="ChEBI" id="CHEBI:29105"/>
        <note>catalytic</note>
    </ligand>
</feature>
<feature type="binding site" evidence="1">
    <location>
        <position position="14"/>
    </location>
    <ligand>
        <name>substrate</name>
    </ligand>
</feature>
<feature type="binding site" evidence="1">
    <location>
        <position position="14"/>
    </location>
    <ligand>
        <name>Zn(2+)</name>
        <dbReference type="ChEBI" id="CHEBI:29105"/>
        <note>catalytic</note>
    </ligand>
</feature>
<feature type="binding site" evidence="1">
    <location>
        <position position="16"/>
    </location>
    <ligand>
        <name>substrate</name>
    </ligand>
</feature>
<feature type="binding site" evidence="1">
    <location>
        <position position="197"/>
    </location>
    <ligand>
        <name>Zn(2+)</name>
        <dbReference type="ChEBI" id="CHEBI:29105"/>
        <note>catalytic</note>
    </ligand>
</feature>
<feature type="binding site" evidence="1">
    <location>
        <position position="278"/>
    </location>
    <ligand>
        <name>Zn(2+)</name>
        <dbReference type="ChEBI" id="CHEBI:29105"/>
        <note>catalytic</note>
    </ligand>
</feature>
<feature type="site" description="Important for catalytic activity" evidence="1">
    <location>
        <position position="221"/>
    </location>
</feature>
<name>ADD_CLOBK</name>
<keyword id="KW-0378">Hydrolase</keyword>
<keyword id="KW-0479">Metal-binding</keyword>
<keyword id="KW-0546">Nucleotide metabolism</keyword>
<keyword id="KW-0862">Zinc</keyword>
<accession>B1IHX4</accession>